<keyword id="KW-0025">Alternative splicing</keyword>
<keyword id="KW-1186">Ciliopathy</keyword>
<keyword id="KW-0963">Cytoplasm</keyword>
<keyword id="KW-1012">Kartagener syndrome</keyword>
<keyword id="KW-0597">Phosphoprotein</keyword>
<keyword id="KW-0990">Primary ciliary dyskinesia</keyword>
<keyword id="KW-1267">Proteomics identification</keyword>
<keyword id="KW-1185">Reference proteome</keyword>
<accession>Q9NVR5</accession>
<accession>B9WS54</accession>
<accession>C0JAP7</accession>
<accession>Q86TR1</accession>
<accession>Q86TY8</accession>
<accession>Q969Z5</accession>
<reference key="1">
    <citation type="journal article" date="2008" name="Nature">
        <title>Ktu/PF13 is required for cytoplasmic pre-assembly of axonemal dyneins.</title>
        <authorList>
            <person name="Omran H."/>
            <person name="Kobayashi D."/>
            <person name="Olbrich H."/>
            <person name="Tsukahara T."/>
            <person name="Loges N.T."/>
            <person name="Hagiwara H."/>
            <person name="Zhang Q."/>
            <person name="Leblond G."/>
            <person name="O'Toole E."/>
            <person name="Hara C."/>
            <person name="Mizuno H."/>
            <person name="Kawano H."/>
            <person name="Fliegauf M."/>
            <person name="Yagi T."/>
            <person name="Koshida S."/>
            <person name="Miyawaki A."/>
            <person name="Zentgraf H."/>
            <person name="Seithe H."/>
            <person name="Reinhardt R."/>
            <person name="Watanabe Y."/>
            <person name="Kamiya R."/>
            <person name="Mitchell D.R."/>
            <person name="Takeda H."/>
        </authorList>
    </citation>
    <scope>NUCLEOTIDE SEQUENCE [MRNA]</scope>
    <scope>INVOLVEMENT IN CILD10</scope>
    <scope>SUBCELLULAR LOCATION</scope>
</reference>
<reference key="2">
    <citation type="submission" date="2003-02" db="EMBL/GenBank/DDBJ databases">
        <title>Full-length cDNA libraries and normalization.</title>
        <authorList>
            <person name="Li W.B."/>
            <person name="Gruber C."/>
            <person name="Jessee J."/>
            <person name="Polayes D."/>
        </authorList>
    </citation>
    <scope>NUCLEOTIDE SEQUENCE [LARGE SCALE MRNA] OF 1-424</scope>
    <scope>NUCLEOTIDE SEQUENCE [LARGE SCALE MRNA] OF 396-837 (ISOFORM 2)</scope>
    <source>
        <tissue>Neuroblastoma</tissue>
    </source>
</reference>
<reference key="3">
    <citation type="journal article" date="2004" name="Nat. Genet.">
        <title>Complete sequencing and characterization of 21,243 full-length human cDNAs.</title>
        <authorList>
            <person name="Ota T."/>
            <person name="Suzuki Y."/>
            <person name="Nishikawa T."/>
            <person name="Otsuki T."/>
            <person name="Sugiyama T."/>
            <person name="Irie R."/>
            <person name="Wakamatsu A."/>
            <person name="Hayashi K."/>
            <person name="Sato H."/>
            <person name="Nagai K."/>
            <person name="Kimura K."/>
            <person name="Makita H."/>
            <person name="Sekine M."/>
            <person name="Obayashi M."/>
            <person name="Nishi T."/>
            <person name="Shibahara T."/>
            <person name="Tanaka T."/>
            <person name="Ishii S."/>
            <person name="Yamamoto J."/>
            <person name="Saito K."/>
            <person name="Kawai Y."/>
            <person name="Isono Y."/>
            <person name="Nakamura Y."/>
            <person name="Nagahari K."/>
            <person name="Murakami K."/>
            <person name="Yasuda T."/>
            <person name="Iwayanagi T."/>
            <person name="Wagatsuma M."/>
            <person name="Shiratori A."/>
            <person name="Sudo H."/>
            <person name="Hosoiri T."/>
            <person name="Kaku Y."/>
            <person name="Kodaira H."/>
            <person name="Kondo H."/>
            <person name="Sugawara M."/>
            <person name="Takahashi M."/>
            <person name="Kanda K."/>
            <person name="Yokoi T."/>
            <person name="Furuya T."/>
            <person name="Kikkawa E."/>
            <person name="Omura Y."/>
            <person name="Abe K."/>
            <person name="Kamihara K."/>
            <person name="Katsuta N."/>
            <person name="Sato K."/>
            <person name="Tanikawa M."/>
            <person name="Yamazaki M."/>
            <person name="Ninomiya K."/>
            <person name="Ishibashi T."/>
            <person name="Yamashita H."/>
            <person name="Murakawa K."/>
            <person name="Fujimori K."/>
            <person name="Tanai H."/>
            <person name="Kimata M."/>
            <person name="Watanabe M."/>
            <person name="Hiraoka S."/>
            <person name="Chiba Y."/>
            <person name="Ishida S."/>
            <person name="Ono Y."/>
            <person name="Takiguchi S."/>
            <person name="Watanabe S."/>
            <person name="Yosida M."/>
            <person name="Hotuta T."/>
            <person name="Kusano J."/>
            <person name="Kanehori K."/>
            <person name="Takahashi-Fujii A."/>
            <person name="Hara H."/>
            <person name="Tanase T.-O."/>
            <person name="Nomura Y."/>
            <person name="Togiya S."/>
            <person name="Komai F."/>
            <person name="Hara R."/>
            <person name="Takeuchi K."/>
            <person name="Arita M."/>
            <person name="Imose N."/>
            <person name="Musashino K."/>
            <person name="Yuuki H."/>
            <person name="Oshima A."/>
            <person name="Sasaki N."/>
            <person name="Aotsuka S."/>
            <person name="Yoshikawa Y."/>
            <person name="Matsunawa H."/>
            <person name="Ichihara T."/>
            <person name="Shiohata N."/>
            <person name="Sano S."/>
            <person name="Moriya S."/>
            <person name="Momiyama H."/>
            <person name="Satoh N."/>
            <person name="Takami S."/>
            <person name="Terashima Y."/>
            <person name="Suzuki O."/>
            <person name="Nakagawa S."/>
            <person name="Senoh A."/>
            <person name="Mizoguchi H."/>
            <person name="Goto Y."/>
            <person name="Shimizu F."/>
            <person name="Wakebe H."/>
            <person name="Hishigaki H."/>
            <person name="Watanabe T."/>
            <person name="Sugiyama A."/>
            <person name="Takemoto M."/>
            <person name="Kawakami B."/>
            <person name="Yamazaki M."/>
            <person name="Watanabe K."/>
            <person name="Kumagai A."/>
            <person name="Itakura S."/>
            <person name="Fukuzumi Y."/>
            <person name="Fujimori Y."/>
            <person name="Komiyama M."/>
            <person name="Tashiro H."/>
            <person name="Tanigami A."/>
            <person name="Fujiwara T."/>
            <person name="Ono T."/>
            <person name="Yamada K."/>
            <person name="Fujii Y."/>
            <person name="Ozaki K."/>
            <person name="Hirao M."/>
            <person name="Ohmori Y."/>
            <person name="Kawabata A."/>
            <person name="Hikiji T."/>
            <person name="Kobatake N."/>
            <person name="Inagaki H."/>
            <person name="Ikema Y."/>
            <person name="Okamoto S."/>
            <person name="Okitani R."/>
            <person name="Kawakami T."/>
            <person name="Noguchi S."/>
            <person name="Itoh T."/>
            <person name="Shigeta K."/>
            <person name="Senba T."/>
            <person name="Matsumura K."/>
            <person name="Nakajima Y."/>
            <person name="Mizuno T."/>
            <person name="Morinaga M."/>
            <person name="Sasaki M."/>
            <person name="Togashi T."/>
            <person name="Oyama M."/>
            <person name="Hata H."/>
            <person name="Watanabe M."/>
            <person name="Komatsu T."/>
            <person name="Mizushima-Sugano J."/>
            <person name="Satoh T."/>
            <person name="Shirai Y."/>
            <person name="Takahashi Y."/>
            <person name="Nakagawa K."/>
            <person name="Okumura K."/>
            <person name="Nagase T."/>
            <person name="Nomura N."/>
            <person name="Kikuchi H."/>
            <person name="Masuho Y."/>
            <person name="Yamashita R."/>
            <person name="Nakai K."/>
            <person name="Yada T."/>
            <person name="Nakamura Y."/>
            <person name="Ohara O."/>
            <person name="Isogai T."/>
            <person name="Sugano S."/>
        </authorList>
    </citation>
    <scope>NUCLEOTIDE SEQUENCE [LARGE SCALE MRNA] OF 379-837 (ISOFORM 1)</scope>
</reference>
<reference key="4">
    <citation type="journal article" date="2003" name="Nature">
        <title>The DNA sequence and analysis of human chromosome 14.</title>
        <authorList>
            <person name="Heilig R."/>
            <person name="Eckenberg R."/>
            <person name="Petit J.-L."/>
            <person name="Fonknechten N."/>
            <person name="Da Silva C."/>
            <person name="Cattolico L."/>
            <person name="Levy M."/>
            <person name="Barbe V."/>
            <person name="De Berardinis V."/>
            <person name="Ureta-Vidal A."/>
            <person name="Pelletier E."/>
            <person name="Vico V."/>
            <person name="Anthouard V."/>
            <person name="Rowen L."/>
            <person name="Madan A."/>
            <person name="Qin S."/>
            <person name="Sun H."/>
            <person name="Du H."/>
            <person name="Pepin K."/>
            <person name="Artiguenave F."/>
            <person name="Robert C."/>
            <person name="Cruaud C."/>
            <person name="Bruels T."/>
            <person name="Jaillon O."/>
            <person name="Friedlander L."/>
            <person name="Samson G."/>
            <person name="Brottier P."/>
            <person name="Cure S."/>
            <person name="Segurens B."/>
            <person name="Aniere F."/>
            <person name="Samain S."/>
            <person name="Crespeau H."/>
            <person name="Abbasi N."/>
            <person name="Aiach N."/>
            <person name="Boscus D."/>
            <person name="Dickhoff R."/>
            <person name="Dors M."/>
            <person name="Dubois I."/>
            <person name="Friedman C."/>
            <person name="Gouyvenoux M."/>
            <person name="James R."/>
            <person name="Madan A."/>
            <person name="Mairey-Estrada B."/>
            <person name="Mangenot S."/>
            <person name="Martins N."/>
            <person name="Menard M."/>
            <person name="Oztas S."/>
            <person name="Ratcliffe A."/>
            <person name="Shaffer T."/>
            <person name="Trask B."/>
            <person name="Vacherie B."/>
            <person name="Bellemere C."/>
            <person name="Belser C."/>
            <person name="Besnard-Gonnet M."/>
            <person name="Bartol-Mavel D."/>
            <person name="Boutard M."/>
            <person name="Briez-Silla S."/>
            <person name="Combette S."/>
            <person name="Dufosse-Laurent V."/>
            <person name="Ferron C."/>
            <person name="Lechaplais C."/>
            <person name="Louesse C."/>
            <person name="Muselet D."/>
            <person name="Magdelenat G."/>
            <person name="Pateau E."/>
            <person name="Petit E."/>
            <person name="Sirvain-Trukniewicz P."/>
            <person name="Trybou A."/>
            <person name="Vega-Czarny N."/>
            <person name="Bataille E."/>
            <person name="Bluet E."/>
            <person name="Bordelais I."/>
            <person name="Dubois M."/>
            <person name="Dumont C."/>
            <person name="Guerin T."/>
            <person name="Haffray S."/>
            <person name="Hammadi R."/>
            <person name="Muanga J."/>
            <person name="Pellouin V."/>
            <person name="Robert D."/>
            <person name="Wunderle E."/>
            <person name="Gauguet G."/>
            <person name="Roy A."/>
            <person name="Sainte-Marthe L."/>
            <person name="Verdier J."/>
            <person name="Verdier-Discala C."/>
            <person name="Hillier L.W."/>
            <person name="Fulton L."/>
            <person name="McPherson J."/>
            <person name="Matsuda F."/>
            <person name="Wilson R."/>
            <person name="Scarpelli C."/>
            <person name="Gyapay G."/>
            <person name="Wincker P."/>
            <person name="Saurin W."/>
            <person name="Quetier F."/>
            <person name="Waterston R."/>
            <person name="Hood L."/>
            <person name="Weissenbach J."/>
        </authorList>
    </citation>
    <scope>NUCLEOTIDE SEQUENCE [LARGE SCALE GENOMIC DNA]</scope>
</reference>
<reference key="5">
    <citation type="journal article" date="2004" name="Genome Res.">
        <title>The status, quality, and expansion of the NIH full-length cDNA project: the Mammalian Gene Collection (MGC).</title>
        <authorList>
            <consortium name="The MGC Project Team"/>
        </authorList>
    </citation>
    <scope>NUCLEOTIDE SEQUENCE [LARGE SCALE MRNA] OF 386-837 (ISOFORM 2)</scope>
    <source>
        <tissue>Bone marrow</tissue>
        <tissue>Colon</tissue>
    </source>
</reference>
<reference key="6">
    <citation type="journal article" date="2008" name="Mol. Cell">
        <title>Kinase-selective enrichment enables quantitative phosphoproteomics of the kinome across the cell cycle.</title>
        <authorList>
            <person name="Daub H."/>
            <person name="Olsen J.V."/>
            <person name="Bairlein M."/>
            <person name="Gnad F."/>
            <person name="Oppermann F.S."/>
            <person name="Korner R."/>
            <person name="Greff Z."/>
            <person name="Keri G."/>
            <person name="Stemmann O."/>
            <person name="Mann M."/>
        </authorList>
    </citation>
    <scope>IDENTIFICATION BY MASS SPECTROMETRY [LARGE SCALE ANALYSIS]</scope>
    <source>
        <tissue>Cervix carcinoma</tissue>
    </source>
</reference>
<reference key="7">
    <citation type="journal article" date="2008" name="Proc. Natl. Acad. Sci. U.S.A.">
        <title>A quantitative atlas of mitotic phosphorylation.</title>
        <authorList>
            <person name="Dephoure N."/>
            <person name="Zhou C."/>
            <person name="Villen J."/>
            <person name="Beausoleil S.A."/>
            <person name="Bakalarski C.E."/>
            <person name="Elledge S.J."/>
            <person name="Gygi S.P."/>
        </authorList>
    </citation>
    <scope>PHOSPHORYLATION [LARGE SCALE ANALYSIS] AT SER-461 AND SER-467</scope>
    <scope>IDENTIFICATION BY MASS SPECTROMETRY [LARGE SCALE ANALYSIS]</scope>
    <source>
        <tissue>Cervix carcinoma</tissue>
    </source>
</reference>
<reference key="8">
    <citation type="journal article" date="2009" name="Sci. Signal.">
        <title>Quantitative phosphoproteomic analysis of T cell receptor signaling reveals system-wide modulation of protein-protein interactions.</title>
        <authorList>
            <person name="Mayya V."/>
            <person name="Lundgren D.H."/>
            <person name="Hwang S.-I."/>
            <person name="Rezaul K."/>
            <person name="Wu L."/>
            <person name="Eng J.K."/>
            <person name="Rodionov V."/>
            <person name="Han D.K."/>
        </authorList>
    </citation>
    <scope>IDENTIFICATION BY MASS SPECTROMETRY [LARGE SCALE ANALYSIS]</scope>
    <source>
        <tissue>Leukemic T-cell</tissue>
    </source>
</reference>
<reference key="9">
    <citation type="journal article" date="2010" name="Sci. Signal.">
        <title>Quantitative phosphoproteomics reveals widespread full phosphorylation site occupancy during mitosis.</title>
        <authorList>
            <person name="Olsen J.V."/>
            <person name="Vermeulen M."/>
            <person name="Santamaria A."/>
            <person name="Kumar C."/>
            <person name="Miller M.L."/>
            <person name="Jensen L.J."/>
            <person name="Gnad F."/>
            <person name="Cox J."/>
            <person name="Jensen T.S."/>
            <person name="Nigg E.A."/>
            <person name="Brunak S."/>
            <person name="Mann M."/>
        </authorList>
    </citation>
    <scope>PHOSPHORYLATION [LARGE SCALE ANALYSIS] AT SER-640; SER-641 AND SER-773</scope>
    <scope>IDENTIFICATION BY MASS SPECTROMETRY [LARGE SCALE ANALYSIS]</scope>
    <source>
        <tissue>Cervix carcinoma</tissue>
    </source>
</reference>
<reference key="10">
    <citation type="journal article" date="2013" name="J. Proteome Res.">
        <title>Toward a comprehensive characterization of a human cancer cell phosphoproteome.</title>
        <authorList>
            <person name="Zhou H."/>
            <person name="Di Palma S."/>
            <person name="Preisinger C."/>
            <person name="Peng M."/>
            <person name="Polat A.N."/>
            <person name="Heck A.J."/>
            <person name="Mohammed S."/>
        </authorList>
    </citation>
    <scope>PHOSPHORYLATION [LARGE SCALE ANALYSIS] AT SER-773</scope>
    <scope>IDENTIFICATION BY MASS SPECTROMETRY [LARGE SCALE ANALYSIS]</scope>
    <source>
        <tissue>Cervix carcinoma</tissue>
        <tissue>Erythroleukemia</tissue>
    </source>
</reference>
<reference key="11">
    <citation type="journal article" date="2013" name="Nat. Genet.">
        <title>DYX1C1 is required for axonemal dynein assembly and ciliary motility.</title>
        <authorList>
            <person name="Tarkar A."/>
            <person name="Loges N.T."/>
            <person name="Slagle C.E."/>
            <person name="Francis R."/>
            <person name="Dougherty G.W."/>
            <person name="Tamayo J.V."/>
            <person name="Shook B."/>
            <person name="Cantino M."/>
            <person name="Schwartz D."/>
            <person name="Jahnke C."/>
            <person name="Olbrich H."/>
            <person name="Werner C."/>
            <person name="Raidt J."/>
            <person name="Pennekamp P."/>
            <person name="Abouhamed M."/>
            <person name="Hjeij R."/>
            <person name="Kohler G."/>
            <person name="Griese M."/>
            <person name="Li Y."/>
            <person name="Lemke K."/>
            <person name="Klena N."/>
            <person name="Liu X."/>
            <person name="Gabriel G."/>
            <person name="Tobita K."/>
            <person name="Jaspers M."/>
            <person name="Morgan L.C."/>
            <person name="Shapiro A.J."/>
            <person name="Letteboer S.J."/>
            <person name="Mans D.A."/>
            <person name="Carson J.L."/>
            <person name="Leigh M.W."/>
            <person name="Wolf W.E."/>
            <person name="Chen S."/>
            <person name="Lucas J.S."/>
            <person name="Onoufriadis A."/>
            <person name="Plagnol V."/>
            <person name="Schmidts M."/>
            <person name="Boldt K."/>
            <person name="Roepman R."/>
            <person name="Zariwala M.A."/>
            <person name="Lo C.W."/>
            <person name="Mitchison H.M."/>
            <person name="Knowles M.R."/>
            <person name="Burdine R.D."/>
            <person name="Loturco J.J."/>
            <person name="Omran H."/>
        </authorList>
    </citation>
    <scope>INTERACTION WITH DNAAF4</scope>
</reference>
<reference key="12">
    <citation type="journal article" date="2014" name="Eur. Respir. J.">
        <title>Ciliary beat pattern and frequency in genetic variants of primary ciliary dyskinesia.</title>
        <authorList>
            <person name="Raidt J."/>
            <person name="Wallmeier J."/>
            <person name="Hjeij R."/>
            <person name="Onnebrink J.G."/>
            <person name="Pennekamp P."/>
            <person name="Loges N.T."/>
            <person name="Olbrich H."/>
            <person name="Haeffner K."/>
            <person name="Dougherty G.W."/>
            <person name="Omran H."/>
            <person name="Werner C."/>
        </authorList>
    </citation>
    <scope>INVOLVEMENT IN CILD10</scope>
</reference>
<reference key="13">
    <citation type="journal article" date="2017" name="Am. J. Hum. Genet.">
        <title>Mutations in PIH1D3 Cause X-Linked Primary Ciliary Dyskinesia with Outer and Inner Dynein Arm Defects.</title>
        <authorList>
            <person name="Paff T."/>
            <person name="Loges N.T."/>
            <person name="Aprea I."/>
            <person name="Wu K."/>
            <person name="Bakey Z."/>
            <person name="Haarman E.G."/>
            <person name="Daniels J.M."/>
            <person name="Sistermans E.A."/>
            <person name="Bogunovic N."/>
            <person name="Dougherty G.W."/>
            <person name="Hoeben I.M."/>
            <person name="Grosse-Onnebrink J."/>
            <person name="Matter A."/>
            <person name="Olbrich H."/>
            <person name="Werner C."/>
            <person name="Pals G."/>
            <person name="Schmidts M."/>
            <person name="Omran H."/>
            <person name="Micha D."/>
        </authorList>
    </citation>
    <scope>INTERACTION WITH DNAAF6</scope>
</reference>
<reference key="14">
    <citation type="journal article" date="2018" name="Am. J. Hum. Genet.">
        <title>Mutations in C11orf70 cause primary ciliary dyskinesia with randomization of left/right body asymmetry due to defects of outer and inner dynein arms.</title>
        <authorList>
            <person name="Hoeben I.M."/>
            <person name="Hjeij R."/>
            <person name="Olbrich H."/>
            <person name="Dougherty G.W."/>
            <person name="Noethe-Menchen T."/>
            <person name="Aprea I."/>
            <person name="Frank D."/>
            <person name="Pennekamp P."/>
            <person name="Dworniczak B."/>
            <person name="Wallmeier J."/>
            <person name="Raidt J."/>
            <person name="Nielsen K.G."/>
            <person name="Philipsen M.C."/>
            <person name="Santamaria F."/>
            <person name="Venditto L."/>
            <person name="Amirav I."/>
            <person name="Mussaffi H."/>
            <person name="Prenzel F."/>
            <person name="Wu K."/>
            <person name="Bakey Z."/>
            <person name="Schmidts M."/>
            <person name="Loges N.T."/>
            <person name="Omran H."/>
        </authorList>
    </citation>
    <scope>INTERACTION WITH CFAP300</scope>
</reference>
<proteinExistence type="evidence at protein level"/>
<comment type="function">
    <text evidence="2">Required for cytoplasmic pre-assembly of axonemal dyneins, thereby playing a central role in motility in cilia and flagella. Involved in pre-assembly of dynein arm complexes in the cytoplasm before intraflagellar transport loads them for the ciliary compartment.</text>
</comment>
<comment type="subunit">
    <text evidence="2 5 7 8">Interacts with CFAP300 (PubMed:29727693). Interacts with DNAAF4 (PubMed:23872636). Interacts with DNAAF6/PIH1D3 (PubMed:28041644). Interacts with DNAI2 and HSPA1A (By similarity).</text>
</comment>
<comment type="interaction">
    <interactant intactId="EBI-9392930">
        <id>Q9NVR5</id>
    </interactant>
    <interactant intactId="EBI-9379147">
        <id>Q7Z6J8</id>
        <label>UBE3D</label>
    </interactant>
    <organismsDiffer>false</organismsDiffer>
    <experiments>4</experiments>
</comment>
<comment type="subcellular location">
    <subcellularLocation>
        <location evidence="2 4">Cytoplasm</location>
    </subcellularLocation>
    <subcellularLocation>
        <location evidence="1">Dynein axonemal particle</location>
    </subcellularLocation>
    <text evidence="2">Localizes in the apical cytoplasm around the gamma-tubulin-positive pericentriolar region, not in the cilia.</text>
</comment>
<comment type="alternative products">
    <event type="alternative splicing"/>
    <isoform>
        <id>Q9NVR5-1</id>
        <name>1</name>
        <sequence type="displayed"/>
    </isoform>
    <isoform>
        <id>Q9NVR5-2</id>
        <name>2</name>
        <sequence type="described" ref="VSP_008390"/>
    </isoform>
</comment>
<comment type="disease" evidence="4 6">
    <disease id="DI-00934">
        <name>Ciliary dyskinesia, primary, 10</name>
        <acronym>CILD10</acronym>
        <description>A disorder characterized by abnormalities of motile cilia. Respiratory infections leading to chronic inflammation and bronchiectasis are recurrent, due to defects in the respiratory cilia; reduced fertility is often observed in male patients due to abnormalities of sperm tails. Half of the patients exhibit randomization of left-right body asymmetry and situs inversus, due to dysfunction of monocilia at the embryonic node. Primary ciliary dyskinesia associated with situs inversus is referred to as Kartagener syndrome.</description>
        <dbReference type="MIM" id="612518"/>
    </disease>
    <text>The disease is caused by variants affecting the gene represented in this entry.</text>
</comment>
<comment type="miscellaneous">
    <molecule>Isoform 2</molecule>
    <text evidence="11">May be due to exon skipping.</text>
</comment>
<comment type="similarity">
    <text evidence="2">Belongs to the PIH1 family. Kintoun subfamily.</text>
</comment>
<comment type="sequence caution" evidence="11">
    <conflict type="erroneous initiation">
        <sequence resource="EMBL-CDS" id="BAA91684"/>
    </conflict>
    <text>Truncated N-terminus.</text>
</comment>
<comment type="sequence caution" evidence="11">
    <conflict type="erroneous initiation">
        <sequence resource="EMBL-CDS" id="CAD66572"/>
    </conflict>
    <text>Extended N-terminus.</text>
</comment>
<protein>
    <recommendedName>
        <fullName evidence="2">Protein kintoun</fullName>
    </recommendedName>
    <alternativeName>
        <fullName evidence="2">Dynein assembly factor 2, axonemal</fullName>
    </alternativeName>
</protein>
<feature type="chain" id="PRO_0000089911" description="Protein kintoun">
    <location>
        <begin position="1"/>
        <end position="837"/>
    </location>
</feature>
<feature type="region of interest" description="Disordered" evidence="3">
    <location>
        <begin position="100"/>
        <end position="119"/>
    </location>
</feature>
<feature type="region of interest" description="Disordered" evidence="3">
    <location>
        <begin position="205"/>
        <end position="224"/>
    </location>
</feature>
<feature type="region of interest" description="Disordered" evidence="3">
    <location>
        <begin position="230"/>
        <end position="249"/>
    </location>
</feature>
<feature type="region of interest" description="Disordered" evidence="3">
    <location>
        <begin position="363"/>
        <end position="515"/>
    </location>
</feature>
<feature type="compositionally biased region" description="Pro residues" evidence="3">
    <location>
        <begin position="233"/>
        <end position="242"/>
    </location>
</feature>
<feature type="compositionally biased region" description="Basic and acidic residues" evidence="3">
    <location>
        <begin position="428"/>
        <end position="442"/>
    </location>
</feature>
<feature type="compositionally biased region" description="Low complexity" evidence="3">
    <location>
        <begin position="445"/>
        <end position="459"/>
    </location>
</feature>
<feature type="compositionally biased region" description="Basic and acidic residues" evidence="3">
    <location>
        <begin position="484"/>
        <end position="498"/>
    </location>
</feature>
<feature type="modified residue" description="Phosphoserine" evidence="12">
    <location>
        <position position="461"/>
    </location>
</feature>
<feature type="modified residue" description="Phosphoserine" evidence="12">
    <location>
        <position position="467"/>
    </location>
</feature>
<feature type="modified residue" description="Phosphoserine" evidence="13">
    <location>
        <position position="640"/>
    </location>
</feature>
<feature type="modified residue" description="Phosphoserine" evidence="13">
    <location>
        <position position="641"/>
    </location>
</feature>
<feature type="modified residue" description="Phosphoserine" evidence="13 14">
    <location>
        <position position="773"/>
    </location>
</feature>
<feature type="splice variant" id="VSP_008390" description="In isoform 2." evidence="9 10">
    <location>
        <begin position="622"/>
        <end position="669"/>
    </location>
</feature>
<feature type="sequence variant" id="VAR_057788" description="In dbSNP:rs2985684.">
    <original>E</original>
    <variation>D</variation>
    <location>
        <position position="62"/>
    </location>
</feature>
<feature type="sequence variant" id="VAR_024309" description="In dbSNP:rs9989177.">
    <original>D</original>
    <variation>G</variation>
    <location>
        <position position="768"/>
    </location>
</feature>
<feature type="sequence conflict" description="In Ref. 5; AAH13322." evidence="11" ref="5">
    <original>C</original>
    <variation>G</variation>
    <location>
        <position position="403"/>
    </location>
</feature>
<evidence type="ECO:0000250" key="1">
    <source>
        <dbReference type="UniProtKB" id="B1H1W9"/>
    </source>
</evidence>
<evidence type="ECO:0000255" key="2">
    <source>
        <dbReference type="HAMAP-Rule" id="MF_03069"/>
    </source>
</evidence>
<evidence type="ECO:0000256" key="3">
    <source>
        <dbReference type="SAM" id="MobiDB-lite"/>
    </source>
</evidence>
<evidence type="ECO:0000269" key="4">
    <source>
    </source>
</evidence>
<evidence type="ECO:0000269" key="5">
    <source>
    </source>
</evidence>
<evidence type="ECO:0000269" key="6">
    <source>
    </source>
</evidence>
<evidence type="ECO:0000269" key="7">
    <source>
    </source>
</evidence>
<evidence type="ECO:0000269" key="8">
    <source>
    </source>
</evidence>
<evidence type="ECO:0000303" key="9">
    <source>
    </source>
</evidence>
<evidence type="ECO:0000303" key="10">
    <source ref="2"/>
</evidence>
<evidence type="ECO:0000305" key="11"/>
<evidence type="ECO:0007744" key="12">
    <source>
    </source>
</evidence>
<evidence type="ECO:0007744" key="13">
    <source>
    </source>
</evidence>
<evidence type="ECO:0007744" key="14">
    <source>
    </source>
</evidence>
<sequence length="837" mass="91114">MAKAAASSSLEDLDLSGEEVQRLTSAFQDPEFRRMFSQYAEELTDPENRRRYEAEITALERERGVEVRFVHPEPGHVLRTSLDGARRCFVNVCSNALVGAPSSRPGSGGDRGAAPGSHWSLPYSLAPGREYAGRSSSRYMVYDVVFHPDALALARRHEGFRQMLDATALEAVEKQFGVKLDRRNAKTLKAKYKGTPEAAVLRTPLPGVIPARPDGEPKGPLPDFPYPYQYPAAPGPRAPSPPEAALQPAPTEPRYSVVQRHHVDLQDYRCSRDSAPSPVPHELVITIELPLLRSAEQAALEVTRKLLCLDSRKPDYRLRLSLPYPVDDGRGKAQFNKARRQLVVTLPVVLPAARREPAVAVAAAAPEESADRSGTDGQACASAREGEAGPARSRAEDGGHDTCVAGAAGSGVTTLGDPEVAPPPAAAGEERVPKPGEQDLSRHAGSPPGSVEEPSPGGENSPGGGGSPCLSSRSLAWGSSAGRESARGDSSVETREESEGTGGQRSACAMGGPGTKSGEPLCPPLLCNQDKETLTLLIQVPRIQPQSLQGDLNPLWYKLRFSAQDLVYSFFLQFAPENKLSTTEPVISISSNNAVIELAKSPESHGHWREWYYGVNNDSLEERLFVNEENVNEFLEEVLSSPFKQSMSLTPPLIEVLQVTDNKIQINAKLQECSNSDQLQGKEERVNEESHLTEKEYIEHCNTPTTDSDSSIAVKALQIDSFGLVTCFQQESLDVSQMILGKSQQPESKMQSEFIKEKSATCSNEEKDNLNESVITEEKETDGDHLSSLLNKTTVHNIPGFDSIKETNMQDGSVQVIKDHVTNCAFSFQNSLLYDLD</sequence>
<dbReference type="EMBL" id="FJ158843">
    <property type="protein sequence ID" value="ACN30493.1"/>
    <property type="molecule type" value="mRNA"/>
</dbReference>
<dbReference type="EMBL" id="BX248264">
    <property type="protein sequence ID" value="CAD62592.1"/>
    <property type="molecule type" value="mRNA"/>
</dbReference>
<dbReference type="EMBL" id="BX248765">
    <property type="protein sequence ID" value="CAD66572.1"/>
    <property type="status" value="ALT_INIT"/>
    <property type="molecule type" value="mRNA"/>
</dbReference>
<dbReference type="EMBL" id="AK001425">
    <property type="protein sequence ID" value="BAA91684.1"/>
    <property type="status" value="ALT_INIT"/>
    <property type="molecule type" value="mRNA"/>
</dbReference>
<dbReference type="EMBL" id="AL139099">
    <property type="status" value="NOT_ANNOTATED_CDS"/>
    <property type="molecule type" value="Genomic_DNA"/>
</dbReference>
<dbReference type="EMBL" id="BC013322">
    <property type="protein sequence ID" value="AAH13322.2"/>
    <property type="molecule type" value="mRNA"/>
</dbReference>
<dbReference type="EMBL" id="BC011400">
    <property type="protein sequence ID" value="AAH11400.2"/>
    <property type="molecule type" value="mRNA"/>
</dbReference>
<dbReference type="CCDS" id="CCDS45100.1">
    <molecule id="Q9NVR5-2"/>
</dbReference>
<dbReference type="CCDS" id="CCDS9691.2">
    <molecule id="Q9NVR5-1"/>
</dbReference>
<dbReference type="RefSeq" id="NP_001077377.1">
    <molecule id="Q9NVR5-2"/>
    <property type="nucleotide sequence ID" value="NM_001083908.2"/>
</dbReference>
<dbReference type="RefSeq" id="NP_060609.2">
    <molecule id="Q9NVR5-1"/>
    <property type="nucleotide sequence ID" value="NM_018139.3"/>
</dbReference>
<dbReference type="SMR" id="Q9NVR5"/>
<dbReference type="BioGRID" id="120471">
    <property type="interactions" value="103"/>
</dbReference>
<dbReference type="ComplexPortal" id="CPX-6152">
    <property type="entry name" value="R2SD co-chaperone complex"/>
</dbReference>
<dbReference type="CORUM" id="Q9NVR5"/>
<dbReference type="DIP" id="DIP-59041N"/>
<dbReference type="FunCoup" id="Q9NVR5">
    <property type="interactions" value="255"/>
</dbReference>
<dbReference type="IntAct" id="Q9NVR5">
    <property type="interactions" value="81"/>
</dbReference>
<dbReference type="MINT" id="Q9NVR5"/>
<dbReference type="STRING" id="9606.ENSP00000298292"/>
<dbReference type="GlyGen" id="Q9NVR5">
    <property type="glycosylation" value="2 sites, 1 O-linked glycan (1 site)"/>
</dbReference>
<dbReference type="iPTMnet" id="Q9NVR5"/>
<dbReference type="MetOSite" id="Q9NVR5"/>
<dbReference type="PhosphoSitePlus" id="Q9NVR5"/>
<dbReference type="BioMuta" id="DNAAF2"/>
<dbReference type="DMDM" id="224471834"/>
<dbReference type="jPOST" id="Q9NVR5"/>
<dbReference type="MassIVE" id="Q9NVR5"/>
<dbReference type="PaxDb" id="9606-ENSP00000298292"/>
<dbReference type="PeptideAtlas" id="Q9NVR5"/>
<dbReference type="ProteomicsDB" id="82849">
    <molecule id="Q9NVR5-1"/>
</dbReference>
<dbReference type="ProteomicsDB" id="82850">
    <molecule id="Q9NVR5-2"/>
</dbReference>
<dbReference type="Pumba" id="Q9NVR5"/>
<dbReference type="Antibodypedia" id="139">
    <property type="antibodies" value="36 antibodies from 13 providers"/>
</dbReference>
<dbReference type="DNASU" id="55172"/>
<dbReference type="Ensembl" id="ENST00000298292.13">
    <molecule id="Q9NVR5-1"/>
    <property type="protein sequence ID" value="ENSP00000298292.8"/>
    <property type="gene ID" value="ENSG00000165506.15"/>
</dbReference>
<dbReference type="Ensembl" id="ENST00000406043.3">
    <molecule id="Q9NVR5-2"/>
    <property type="protein sequence ID" value="ENSP00000384862.3"/>
    <property type="gene ID" value="ENSG00000165506.15"/>
</dbReference>
<dbReference type="GeneID" id="55172"/>
<dbReference type="KEGG" id="hsa:55172"/>
<dbReference type="MANE-Select" id="ENST00000298292.13">
    <property type="protein sequence ID" value="ENSP00000298292.8"/>
    <property type="RefSeq nucleotide sequence ID" value="NM_018139.3"/>
    <property type="RefSeq protein sequence ID" value="NP_060609.2"/>
</dbReference>
<dbReference type="UCSC" id="uc001wws.4">
    <molecule id="Q9NVR5-1"/>
    <property type="organism name" value="human"/>
</dbReference>
<dbReference type="AGR" id="HGNC:20188"/>
<dbReference type="CTD" id="55172"/>
<dbReference type="DisGeNET" id="55172"/>
<dbReference type="GeneCards" id="DNAAF2"/>
<dbReference type="GeneReviews" id="DNAAF2"/>
<dbReference type="HGNC" id="HGNC:20188">
    <property type="gene designation" value="DNAAF2"/>
</dbReference>
<dbReference type="HPA" id="ENSG00000165506">
    <property type="expression patterns" value="Low tissue specificity"/>
</dbReference>
<dbReference type="MalaCards" id="DNAAF2"/>
<dbReference type="MIM" id="612517">
    <property type="type" value="gene"/>
</dbReference>
<dbReference type="MIM" id="612518">
    <property type="type" value="phenotype"/>
</dbReference>
<dbReference type="neXtProt" id="NX_Q9NVR5"/>
<dbReference type="OpenTargets" id="ENSG00000165506"/>
<dbReference type="Orphanet" id="244">
    <property type="disease" value="Primary ciliary dyskinesia"/>
</dbReference>
<dbReference type="PharmGKB" id="PA134910310"/>
<dbReference type="VEuPathDB" id="HostDB:ENSG00000165506"/>
<dbReference type="eggNOG" id="KOG4356">
    <property type="taxonomic scope" value="Eukaryota"/>
</dbReference>
<dbReference type="GeneTree" id="ENSGT00510000048466"/>
<dbReference type="HOGENOM" id="CLU_018349_0_0_1"/>
<dbReference type="InParanoid" id="Q9NVR5"/>
<dbReference type="OMA" id="KQCMSLT"/>
<dbReference type="OrthoDB" id="546764at2759"/>
<dbReference type="PAN-GO" id="Q9NVR5">
    <property type="GO annotations" value="3 GO annotations based on evolutionary models"/>
</dbReference>
<dbReference type="PhylomeDB" id="Q9NVR5"/>
<dbReference type="TreeFam" id="TF336215"/>
<dbReference type="PathwayCommons" id="Q9NVR5"/>
<dbReference type="SignaLink" id="Q9NVR5"/>
<dbReference type="BioGRID-ORCS" id="55172">
    <property type="hits" value="27 hits in 1158 CRISPR screens"/>
</dbReference>
<dbReference type="ChiTaRS" id="DNAAF2">
    <property type="organism name" value="human"/>
</dbReference>
<dbReference type="GeneWiki" id="C14orf104"/>
<dbReference type="GenomeRNAi" id="55172"/>
<dbReference type="Pharos" id="Q9NVR5">
    <property type="development level" value="Tbio"/>
</dbReference>
<dbReference type="PRO" id="PR:Q9NVR5"/>
<dbReference type="Proteomes" id="UP000005640">
    <property type="component" value="Chromosome 14"/>
</dbReference>
<dbReference type="RNAct" id="Q9NVR5">
    <property type="molecule type" value="protein"/>
</dbReference>
<dbReference type="Bgee" id="ENSG00000165506">
    <property type="expression patterns" value="Expressed in bronchial epithelial cell and 201 other cell types or tissues"/>
</dbReference>
<dbReference type="GO" id="GO:0036064">
    <property type="term" value="C:ciliary basal body"/>
    <property type="evidence" value="ECO:0000314"/>
    <property type="project" value="HPA"/>
</dbReference>
<dbReference type="GO" id="GO:0005929">
    <property type="term" value="C:cilium"/>
    <property type="evidence" value="ECO:0000314"/>
    <property type="project" value="HPA"/>
</dbReference>
<dbReference type="GO" id="GO:0005737">
    <property type="term" value="C:cytoplasm"/>
    <property type="evidence" value="ECO:0000314"/>
    <property type="project" value="UniProtKB"/>
</dbReference>
<dbReference type="GO" id="GO:0005829">
    <property type="term" value="C:cytosol"/>
    <property type="evidence" value="ECO:0000314"/>
    <property type="project" value="HPA"/>
</dbReference>
<dbReference type="GO" id="GO:0120293">
    <property type="term" value="C:dynein axonemal particle"/>
    <property type="evidence" value="ECO:0000250"/>
    <property type="project" value="UniProtKB"/>
</dbReference>
<dbReference type="GO" id="GO:0005576">
    <property type="term" value="C:extracellular region"/>
    <property type="evidence" value="ECO:0007669"/>
    <property type="project" value="GOC"/>
</dbReference>
<dbReference type="GO" id="GO:0005794">
    <property type="term" value="C:Golgi apparatus"/>
    <property type="evidence" value="ECO:0000314"/>
    <property type="project" value="HPA"/>
</dbReference>
<dbReference type="GO" id="GO:0005730">
    <property type="term" value="C:nucleolus"/>
    <property type="evidence" value="ECO:0000314"/>
    <property type="project" value="HPA"/>
</dbReference>
<dbReference type="GO" id="GO:0005654">
    <property type="term" value="C:nucleoplasm"/>
    <property type="evidence" value="ECO:0000314"/>
    <property type="project" value="HPA"/>
</dbReference>
<dbReference type="GO" id="GO:0101031">
    <property type="term" value="C:protein folding chaperone complex"/>
    <property type="evidence" value="ECO:0000353"/>
    <property type="project" value="ComplexPortal"/>
</dbReference>
<dbReference type="GO" id="GO:0070286">
    <property type="term" value="P:axonemal dynein complex assembly"/>
    <property type="evidence" value="ECO:0000315"/>
    <property type="project" value="UniProtKB"/>
</dbReference>
<dbReference type="GO" id="GO:0060285">
    <property type="term" value="P:cilium-dependent cell motility"/>
    <property type="evidence" value="ECO:0000315"/>
    <property type="project" value="UniProtKB"/>
</dbReference>
<dbReference type="GO" id="GO:0003351">
    <property type="term" value="P:epithelial cilium movement involved in extracellular fluid movement"/>
    <property type="evidence" value="ECO:0000318"/>
    <property type="project" value="GO_Central"/>
</dbReference>
<dbReference type="GO" id="GO:0061966">
    <property type="term" value="P:establishment of left/right asymmetry"/>
    <property type="evidence" value="ECO:0007669"/>
    <property type="project" value="Ensembl"/>
</dbReference>
<dbReference type="GO" id="GO:0051649">
    <property type="term" value="P:establishment of localization in cell"/>
    <property type="evidence" value="ECO:0007669"/>
    <property type="project" value="Ensembl"/>
</dbReference>
<dbReference type="GO" id="GO:0001701">
    <property type="term" value="P:in utero embryonic development"/>
    <property type="evidence" value="ECO:0007669"/>
    <property type="project" value="Ensembl"/>
</dbReference>
<dbReference type="GO" id="GO:0036159">
    <property type="term" value="P:inner dynein arm assembly"/>
    <property type="evidence" value="ECO:0007669"/>
    <property type="project" value="Ensembl"/>
</dbReference>
<dbReference type="GO" id="GO:0036158">
    <property type="term" value="P:outer dynein arm assembly"/>
    <property type="evidence" value="ECO:0007669"/>
    <property type="project" value="Ensembl"/>
</dbReference>
<dbReference type="GO" id="GO:0050821">
    <property type="term" value="P:protein stabilization"/>
    <property type="evidence" value="ECO:0000303"/>
    <property type="project" value="ComplexPortal"/>
</dbReference>
<dbReference type="GO" id="GO:0032526">
    <property type="term" value="P:response to retinoic acid"/>
    <property type="evidence" value="ECO:0007669"/>
    <property type="project" value="Ensembl"/>
</dbReference>
<dbReference type="HAMAP" id="MF_03069">
    <property type="entry name" value="Kintoun"/>
    <property type="match status" value="1"/>
</dbReference>
<dbReference type="InterPro" id="IPR034727">
    <property type="entry name" value="Kintoun"/>
</dbReference>
<dbReference type="InterPro" id="IPR050734">
    <property type="entry name" value="PIH1/Kintoun_subfamily"/>
</dbReference>
<dbReference type="InterPro" id="IPR012981">
    <property type="entry name" value="PIH1_N"/>
</dbReference>
<dbReference type="InterPro" id="IPR041442">
    <property type="entry name" value="PIH1D1/2/3_CS-like"/>
</dbReference>
<dbReference type="PANTHER" id="PTHR22997">
    <property type="entry name" value="PIH1 DOMAIN-CONTAINING PROTEIN 1"/>
    <property type="match status" value="1"/>
</dbReference>
<dbReference type="PANTHER" id="PTHR22997:SF3">
    <property type="entry name" value="PROTEIN KINTOUN"/>
    <property type="match status" value="1"/>
</dbReference>
<dbReference type="Pfam" id="PF08190">
    <property type="entry name" value="PIH1"/>
    <property type="match status" value="1"/>
</dbReference>
<dbReference type="Pfam" id="PF18201">
    <property type="entry name" value="PIH1_CS"/>
    <property type="match status" value="1"/>
</dbReference>
<organism>
    <name type="scientific">Homo sapiens</name>
    <name type="common">Human</name>
    <dbReference type="NCBI Taxonomy" id="9606"/>
    <lineage>
        <taxon>Eukaryota</taxon>
        <taxon>Metazoa</taxon>
        <taxon>Chordata</taxon>
        <taxon>Craniata</taxon>
        <taxon>Vertebrata</taxon>
        <taxon>Euteleostomi</taxon>
        <taxon>Mammalia</taxon>
        <taxon>Eutheria</taxon>
        <taxon>Euarchontoglires</taxon>
        <taxon>Primates</taxon>
        <taxon>Haplorrhini</taxon>
        <taxon>Catarrhini</taxon>
        <taxon>Hominidae</taxon>
        <taxon>Homo</taxon>
    </lineage>
</organism>
<gene>
    <name evidence="2" type="primary">DNAAF2</name>
    <name type="synonym">C14orf104</name>
    <name evidence="2" type="synonym">KTU</name>
</gene>
<name>KTU_HUMAN</name>